<dbReference type="EMBL" id="CP002685">
    <property type="protein sequence ID" value="AEC06692.1"/>
    <property type="molecule type" value="Genomic_DNA"/>
</dbReference>
<dbReference type="EMBL" id="AY219091">
    <property type="protein sequence ID" value="AAO37178.1"/>
    <property type="molecule type" value="mRNA"/>
</dbReference>
<dbReference type="EMBL" id="AY219092">
    <property type="protein sequence ID" value="AAO37179.1"/>
    <property type="molecule type" value="mRNA"/>
</dbReference>
<dbReference type="PIR" id="T00841">
    <property type="entry name" value="T00841"/>
</dbReference>
<dbReference type="RefSeq" id="NP_179373.2">
    <molecule id="Q84X17-1"/>
    <property type="nucleotide sequence ID" value="NM_127336.3"/>
</dbReference>
<dbReference type="FunCoup" id="Q84X17">
    <property type="interactions" value="9"/>
</dbReference>
<dbReference type="STRING" id="3702.Q84X17"/>
<dbReference type="PaxDb" id="3702-AT2G17830.1"/>
<dbReference type="ProteomicsDB" id="222544">
    <molecule id="Q84X17-1"/>
</dbReference>
<dbReference type="EnsemblPlants" id="AT2G17830.1">
    <molecule id="Q84X17-1"/>
    <property type="protein sequence ID" value="AT2G17830.1"/>
    <property type="gene ID" value="AT2G17830"/>
</dbReference>
<dbReference type="GeneID" id="816292"/>
<dbReference type="Gramene" id="AT2G17830.1">
    <molecule id="Q84X17-1"/>
    <property type="protein sequence ID" value="AT2G17830.1"/>
    <property type="gene ID" value="AT2G17830"/>
</dbReference>
<dbReference type="KEGG" id="ath:AT2G17830"/>
<dbReference type="Araport" id="AT2G17830"/>
<dbReference type="TAIR" id="AT2G17830"/>
<dbReference type="HOGENOM" id="CLU_034692_0_0_1"/>
<dbReference type="InParanoid" id="Q84X17"/>
<dbReference type="OMA" id="THRGMAY"/>
<dbReference type="PhylomeDB" id="Q84X17"/>
<dbReference type="PRO" id="PR:Q84X17"/>
<dbReference type="Proteomes" id="UP000006548">
    <property type="component" value="Chromosome 2"/>
</dbReference>
<dbReference type="ExpressionAtlas" id="Q84X17">
    <property type="expression patterns" value="baseline and differential"/>
</dbReference>
<dbReference type="CDD" id="cd22157">
    <property type="entry name" value="F-box_AtFBW1-like"/>
    <property type="match status" value="1"/>
</dbReference>
<dbReference type="Gene3D" id="1.20.1280.50">
    <property type="match status" value="1"/>
</dbReference>
<dbReference type="InterPro" id="IPR006527">
    <property type="entry name" value="F-box-assoc_dom_typ1"/>
</dbReference>
<dbReference type="InterPro" id="IPR017451">
    <property type="entry name" value="F-box-assoc_interact_dom"/>
</dbReference>
<dbReference type="InterPro" id="IPR036047">
    <property type="entry name" value="F-box-like_dom_sf"/>
</dbReference>
<dbReference type="InterPro" id="IPR001810">
    <property type="entry name" value="F-box_dom"/>
</dbReference>
<dbReference type="InterPro" id="IPR011043">
    <property type="entry name" value="Gal_Oxase/kelch_b-propeller"/>
</dbReference>
<dbReference type="InterPro" id="IPR050796">
    <property type="entry name" value="SCF_F-box_component"/>
</dbReference>
<dbReference type="NCBIfam" id="TIGR01640">
    <property type="entry name" value="F_box_assoc_1"/>
    <property type="match status" value="1"/>
</dbReference>
<dbReference type="PANTHER" id="PTHR31672">
    <property type="entry name" value="BNACNNG10540D PROTEIN"/>
    <property type="match status" value="1"/>
</dbReference>
<dbReference type="PANTHER" id="PTHR31672:SF13">
    <property type="entry name" value="F-BOX PROTEIN CPR30-LIKE"/>
    <property type="match status" value="1"/>
</dbReference>
<dbReference type="Pfam" id="PF00646">
    <property type="entry name" value="F-box"/>
    <property type="match status" value="1"/>
</dbReference>
<dbReference type="Pfam" id="PF07734">
    <property type="entry name" value="FBA_1"/>
    <property type="match status" value="1"/>
</dbReference>
<dbReference type="SMART" id="SM00256">
    <property type="entry name" value="FBOX"/>
    <property type="match status" value="1"/>
</dbReference>
<dbReference type="SUPFAM" id="SSF81383">
    <property type="entry name" value="F-box domain"/>
    <property type="match status" value="1"/>
</dbReference>
<dbReference type="SUPFAM" id="SSF50965">
    <property type="entry name" value="Galactose oxidase, central domain"/>
    <property type="match status" value="1"/>
</dbReference>
<dbReference type="PROSITE" id="PS50181">
    <property type="entry name" value="FBOX"/>
    <property type="match status" value="1"/>
</dbReference>
<gene>
    <name type="ordered locus">At2g17830</name>
    <name type="ORF">T13L16.15</name>
</gene>
<evidence type="ECO:0000255" key="1">
    <source>
        <dbReference type="PROSITE-ProRule" id="PRU00080"/>
    </source>
</evidence>
<evidence type="ECO:0000303" key="2">
    <source>
    </source>
</evidence>
<proteinExistence type="evidence at transcript level"/>
<reference key="1">
    <citation type="journal article" date="1999" name="Nature">
        <title>Sequence and analysis of chromosome 2 of the plant Arabidopsis thaliana.</title>
        <authorList>
            <person name="Lin X."/>
            <person name="Kaul S."/>
            <person name="Rounsley S.D."/>
            <person name="Shea T.P."/>
            <person name="Benito M.-I."/>
            <person name="Town C.D."/>
            <person name="Fujii C.Y."/>
            <person name="Mason T.M."/>
            <person name="Bowman C.L."/>
            <person name="Barnstead M.E."/>
            <person name="Feldblyum T.V."/>
            <person name="Buell C.R."/>
            <person name="Ketchum K.A."/>
            <person name="Lee J.J."/>
            <person name="Ronning C.M."/>
            <person name="Koo H.L."/>
            <person name="Moffat K.S."/>
            <person name="Cronin L.A."/>
            <person name="Shen M."/>
            <person name="Pai G."/>
            <person name="Van Aken S."/>
            <person name="Umayam L."/>
            <person name="Tallon L.J."/>
            <person name="Gill J.E."/>
            <person name="Adams M.D."/>
            <person name="Carrera A.J."/>
            <person name="Creasy T.H."/>
            <person name="Goodman H.M."/>
            <person name="Somerville C.R."/>
            <person name="Copenhaver G.P."/>
            <person name="Preuss D."/>
            <person name="Nierman W.C."/>
            <person name="White O."/>
            <person name="Eisen J.A."/>
            <person name="Salzberg S.L."/>
            <person name="Fraser C.M."/>
            <person name="Venter J.C."/>
        </authorList>
    </citation>
    <scope>NUCLEOTIDE SEQUENCE [LARGE SCALE GENOMIC DNA]</scope>
    <source>
        <strain>cv. Columbia</strain>
    </source>
</reference>
<reference key="2">
    <citation type="journal article" date="2017" name="Plant J.">
        <title>Araport11: a complete reannotation of the Arabidopsis thaliana reference genome.</title>
        <authorList>
            <person name="Cheng C.Y."/>
            <person name="Krishnakumar V."/>
            <person name="Chan A.P."/>
            <person name="Thibaud-Nissen F."/>
            <person name="Schobel S."/>
            <person name="Town C.D."/>
        </authorList>
    </citation>
    <scope>GENOME REANNOTATION</scope>
    <source>
        <strain>cv. Columbia</strain>
    </source>
</reference>
<reference key="3">
    <citation type="journal article" date="2005" name="Plant Physiol.">
        <title>Analysis of the cDNAs of hypothetical genes on Arabidopsis chromosome 2 reveals numerous transcript variants.</title>
        <authorList>
            <person name="Xiao Y.-L."/>
            <person name="Smith S.R."/>
            <person name="Ishmael N."/>
            <person name="Redman J.C."/>
            <person name="Kumar N."/>
            <person name="Monaghan E.L."/>
            <person name="Ayele M."/>
            <person name="Haas B.J."/>
            <person name="Wu H.C."/>
            <person name="Town C.D."/>
        </authorList>
    </citation>
    <scope>NUCLEOTIDE SEQUENCE [LARGE SCALE MRNA] (ISOFORMS 1 AND 2)</scope>
    <source>
        <strain>cv. Columbia</strain>
    </source>
</reference>
<comment type="alternative products">
    <event type="alternative splicing"/>
    <isoform>
        <id>Q84X17-1</id>
        <name>1</name>
        <sequence type="displayed"/>
    </isoform>
    <isoform>
        <id>Q84X17-2</id>
        <name>2</name>
        <sequence type="described" ref="VSP_024317 VSP_035467"/>
    </isoform>
</comment>
<feature type="chain" id="PRO_0000283383" description="F-box protein At2g17830">
    <location>
        <begin position="1"/>
        <end position="394"/>
    </location>
</feature>
<feature type="domain" description="F-box" evidence="1">
    <location>
        <begin position="1"/>
        <end position="47"/>
    </location>
</feature>
<feature type="splice variant" id="VSP_024317" description="In isoform 2." evidence="2">
    <original>GTLTSFSDDANQHQVD</original>
    <variation>VLEKNSLRCCFRVMLH</variation>
    <location>
        <begin position="90"/>
        <end position="105"/>
    </location>
</feature>
<feature type="splice variant" id="VSP_035467" description="In isoform 2." evidence="2">
    <location>
        <begin position="106"/>
        <end position="394"/>
    </location>
</feature>
<accession>Q84X17</accession>
<accession>Q7XJR5</accession>
<accession>Q84X16</accession>
<name>FB112_ARATH</name>
<sequence>MAIMSDLPRDLLAEILSRVPLASLRSVRFTCKKWNDLSKDRSFLKKQIVEAKKKQLKSKEFEVIMMRNFRVYLTSVDLHNDVNPSFTPKGTLTSFSDDANQHQVDNVSSVFHCDGLLLCITKDLNFRLVVWNPYFGQTRWIQPRNSYHIKDIYAIGYDENKNHKILRLKDQYYDYDSHPRARICEFELYSFESNSWKVVLDVSPDWYIHSYHRGLSVKGNTYWYATEKHGYVNFLICFDFTTEKFGPRLPLPFNATESFTYDDVVTLSSVGEEQLALLFQSDATLMMEIWVTSKVDPTEVLWNKLFLAVDHDMIEFDYELKFVADAGSFFIDQKKNVVVVFDKDMNEHTHRGMAYIVGKNGYFKRVDIGEEAYTSCFPLVCSYVPSSVQIRQLT</sequence>
<protein>
    <recommendedName>
        <fullName>F-box protein At2g17830</fullName>
    </recommendedName>
</protein>
<organism>
    <name type="scientific">Arabidopsis thaliana</name>
    <name type="common">Mouse-ear cress</name>
    <dbReference type="NCBI Taxonomy" id="3702"/>
    <lineage>
        <taxon>Eukaryota</taxon>
        <taxon>Viridiplantae</taxon>
        <taxon>Streptophyta</taxon>
        <taxon>Embryophyta</taxon>
        <taxon>Tracheophyta</taxon>
        <taxon>Spermatophyta</taxon>
        <taxon>Magnoliopsida</taxon>
        <taxon>eudicotyledons</taxon>
        <taxon>Gunneridae</taxon>
        <taxon>Pentapetalae</taxon>
        <taxon>rosids</taxon>
        <taxon>malvids</taxon>
        <taxon>Brassicales</taxon>
        <taxon>Brassicaceae</taxon>
        <taxon>Camelineae</taxon>
        <taxon>Arabidopsis</taxon>
    </lineage>
</organism>
<keyword id="KW-0025">Alternative splicing</keyword>
<keyword id="KW-1185">Reference proteome</keyword>